<feature type="chain" id="PRO_0000390592" description="Prokaryotic ubiquitin-like protein Pup">
    <location>
        <begin position="1"/>
        <end position="63"/>
    </location>
</feature>
<feature type="region of interest" description="Disordered" evidence="2">
    <location>
        <begin position="1"/>
        <end position="36"/>
    </location>
</feature>
<feature type="region of interest" description="ARC ATPase binding" evidence="1">
    <location>
        <begin position="20"/>
        <end position="57"/>
    </location>
</feature>
<feature type="coiled-coil region" evidence="1">
    <location>
        <begin position="23"/>
        <end position="51"/>
    </location>
</feature>
<feature type="compositionally biased region" description="Basic and acidic residues" evidence="2">
    <location>
        <begin position="1"/>
        <end position="11"/>
    </location>
</feature>
<feature type="modified residue" description="Deamidated glutamine" evidence="1">
    <location>
        <position position="63"/>
    </location>
</feature>
<feature type="cross-link" description="Isoglutamyl lysine isopeptide (Gln-Lys) (interchain with K-? in acceptor proteins)" evidence="1">
    <location>
        <position position="63"/>
    </location>
</feature>
<sequence>MAQEQTRRGGGGDDDEFTSSTSVGQERREKLTEETDDLLDEIDDVLEENAEDFVRAYVQKGGQ</sequence>
<dbReference type="EMBL" id="AL035310">
    <property type="protein sequence ID" value="CAA22932.1"/>
    <property type="molecule type" value="Genomic_DNA"/>
</dbReference>
<dbReference type="EMBL" id="AL583921">
    <property type="protein sequence ID" value="CAC31702.1"/>
    <property type="molecule type" value="Genomic_DNA"/>
</dbReference>
<dbReference type="PIR" id="C87074">
    <property type="entry name" value="C87074"/>
</dbReference>
<dbReference type="RefSeq" id="NP_301949.1">
    <property type="nucleotide sequence ID" value="NC_002677.1"/>
</dbReference>
<dbReference type="RefSeq" id="WP_010908270.1">
    <property type="nucleotide sequence ID" value="NC_002677.1"/>
</dbReference>
<dbReference type="SMR" id="Q9ZBE0"/>
<dbReference type="STRING" id="272631.gene:17575155"/>
<dbReference type="KEGG" id="mle:ML1321"/>
<dbReference type="PATRIC" id="fig|272631.5.peg.2438"/>
<dbReference type="Leproma" id="ML1321"/>
<dbReference type="eggNOG" id="ENOG50333JS">
    <property type="taxonomic scope" value="Bacteria"/>
</dbReference>
<dbReference type="HOGENOM" id="CLU_183816_1_0_11"/>
<dbReference type="OrthoDB" id="3254977at2"/>
<dbReference type="UniPathway" id="UPA00997"/>
<dbReference type="Proteomes" id="UP000000806">
    <property type="component" value="Chromosome"/>
</dbReference>
<dbReference type="GO" id="GO:0070628">
    <property type="term" value="F:proteasome binding"/>
    <property type="evidence" value="ECO:0007669"/>
    <property type="project" value="UniProtKB-UniRule"/>
</dbReference>
<dbReference type="GO" id="GO:0031386">
    <property type="term" value="F:protein tag activity"/>
    <property type="evidence" value="ECO:0007669"/>
    <property type="project" value="UniProtKB-UniRule"/>
</dbReference>
<dbReference type="GO" id="GO:0019941">
    <property type="term" value="P:modification-dependent protein catabolic process"/>
    <property type="evidence" value="ECO:0007669"/>
    <property type="project" value="UniProtKB-UniRule"/>
</dbReference>
<dbReference type="GO" id="GO:0010498">
    <property type="term" value="P:proteasomal protein catabolic process"/>
    <property type="evidence" value="ECO:0007669"/>
    <property type="project" value="UniProtKB-UniRule"/>
</dbReference>
<dbReference type="GO" id="GO:0070490">
    <property type="term" value="P:protein pupylation"/>
    <property type="evidence" value="ECO:0007669"/>
    <property type="project" value="UniProtKB-UniRule"/>
</dbReference>
<dbReference type="HAMAP" id="MF_02106">
    <property type="entry name" value="Pup"/>
    <property type="match status" value="1"/>
</dbReference>
<dbReference type="InterPro" id="IPR008515">
    <property type="entry name" value="Ubiquitin-like_Pup"/>
</dbReference>
<dbReference type="NCBIfam" id="TIGR03687">
    <property type="entry name" value="pupylate_cterm"/>
    <property type="match status" value="1"/>
</dbReference>
<dbReference type="Pfam" id="PF05639">
    <property type="entry name" value="Pup"/>
    <property type="match status" value="1"/>
</dbReference>
<gene>
    <name evidence="1" type="primary">pup</name>
    <name type="ordered locus">ML1321</name>
    <name type="ORF">MLCB2533.18</name>
</gene>
<evidence type="ECO:0000255" key="1">
    <source>
        <dbReference type="HAMAP-Rule" id="MF_02106"/>
    </source>
</evidence>
<evidence type="ECO:0000256" key="2">
    <source>
        <dbReference type="SAM" id="MobiDB-lite"/>
    </source>
</evidence>
<proteinExistence type="inferred from homology"/>
<accession>Q9ZBE0</accession>
<comment type="function">
    <text evidence="1">Protein modifier that is covalently attached to lysine residues of substrate proteins, thereby targeting them for proteasomal degradation. The tagging system is termed pupylation.</text>
</comment>
<comment type="pathway">
    <text evidence="1">Protein degradation; proteasomal Pup-dependent pathway.</text>
</comment>
<comment type="subunit">
    <text evidence="1">Strongly interacts with the proteasome-associated ATPase ARC through a hydrophobic interface; the interacting region of Pup lies in its C-terminal half. There is one Pup binding site per ARC hexamer ring.</text>
</comment>
<comment type="domain">
    <text evidence="1">The N-terminal unstructured half of Pup provides a signal required to initiate unfolding and degradation by the proteasome but is not needed for pupylation, while the C-terminal helical half of Pup interacts with ARC to target proteins to the proteasome.</text>
</comment>
<comment type="PTM">
    <text evidence="1">Is modified by deamidation of its C-terminal glutamine to glutamate by the deamidase Dop, a prerequisite to the subsequent pupylation process.</text>
</comment>
<comment type="similarity">
    <text evidence="1">Belongs to the prokaryotic ubiquitin-like protein family.</text>
</comment>
<organism>
    <name type="scientific">Mycobacterium leprae (strain TN)</name>
    <dbReference type="NCBI Taxonomy" id="272631"/>
    <lineage>
        <taxon>Bacteria</taxon>
        <taxon>Bacillati</taxon>
        <taxon>Actinomycetota</taxon>
        <taxon>Actinomycetes</taxon>
        <taxon>Mycobacteriales</taxon>
        <taxon>Mycobacteriaceae</taxon>
        <taxon>Mycobacterium</taxon>
    </lineage>
</organism>
<reference key="1">
    <citation type="journal article" date="2001" name="Nature">
        <title>Massive gene decay in the leprosy bacillus.</title>
        <authorList>
            <person name="Cole S.T."/>
            <person name="Eiglmeier K."/>
            <person name="Parkhill J."/>
            <person name="James K.D."/>
            <person name="Thomson N.R."/>
            <person name="Wheeler P.R."/>
            <person name="Honore N."/>
            <person name="Garnier T."/>
            <person name="Churcher C.M."/>
            <person name="Harris D.E."/>
            <person name="Mungall K.L."/>
            <person name="Basham D."/>
            <person name="Brown D."/>
            <person name="Chillingworth T."/>
            <person name="Connor R."/>
            <person name="Davies R.M."/>
            <person name="Devlin K."/>
            <person name="Duthoy S."/>
            <person name="Feltwell T."/>
            <person name="Fraser A."/>
            <person name="Hamlin N."/>
            <person name="Holroyd S."/>
            <person name="Hornsby T."/>
            <person name="Jagels K."/>
            <person name="Lacroix C."/>
            <person name="Maclean J."/>
            <person name="Moule S."/>
            <person name="Murphy L.D."/>
            <person name="Oliver K."/>
            <person name="Quail M.A."/>
            <person name="Rajandream M.A."/>
            <person name="Rutherford K.M."/>
            <person name="Rutter S."/>
            <person name="Seeger K."/>
            <person name="Simon S."/>
            <person name="Simmonds M."/>
            <person name="Skelton J."/>
            <person name="Squares R."/>
            <person name="Squares S."/>
            <person name="Stevens K."/>
            <person name="Taylor K."/>
            <person name="Whitehead S."/>
            <person name="Woodward J.R."/>
            <person name="Barrell B.G."/>
        </authorList>
    </citation>
    <scope>NUCLEOTIDE SEQUENCE [LARGE SCALE GENOMIC DNA]</scope>
    <source>
        <strain>TN</strain>
    </source>
</reference>
<keyword id="KW-0175">Coiled coil</keyword>
<keyword id="KW-1017">Isopeptide bond</keyword>
<keyword id="KW-1185">Reference proteome</keyword>
<keyword id="KW-0833">Ubl conjugation pathway</keyword>
<name>PUP_MYCLE</name>
<protein>
    <recommendedName>
        <fullName evidence="1">Prokaryotic ubiquitin-like protein Pup</fullName>
    </recommendedName>
    <alternativeName>
        <fullName evidence="1">Bacterial ubiquitin-like modifier</fullName>
    </alternativeName>
</protein>